<keyword id="KW-0238">DNA-binding</keyword>
<keyword id="KW-1017">Isopeptide bond</keyword>
<keyword id="KW-0479">Metal-binding</keyword>
<keyword id="KW-0539">Nucleus</keyword>
<keyword id="KW-1185">Reference proteome</keyword>
<keyword id="KW-0677">Repeat</keyword>
<keyword id="KW-0804">Transcription</keyword>
<keyword id="KW-0805">Transcription regulation</keyword>
<keyword id="KW-0832">Ubl conjugation</keyword>
<keyword id="KW-0862">Zinc</keyword>
<keyword id="KW-0863">Zinc-finger</keyword>
<dbReference type="EMBL" id="AB070073">
    <property type="protein sequence ID" value="BAB63018.1"/>
    <property type="molecule type" value="mRNA"/>
</dbReference>
<dbReference type="RefSeq" id="NP_001274582.1">
    <property type="nucleotide sequence ID" value="NM_001287653.1"/>
</dbReference>
<dbReference type="RefSeq" id="XP_045225508.1">
    <property type="nucleotide sequence ID" value="XM_045369573.2"/>
</dbReference>
<dbReference type="STRING" id="9541.ENSMFAP00000019339"/>
<dbReference type="Ensembl" id="ENSMFAT00000069865.2">
    <property type="protein sequence ID" value="ENSMFAP00000019317.2"/>
    <property type="gene ID" value="ENSMFAG00000032585.2"/>
</dbReference>
<dbReference type="GeneID" id="102142112"/>
<dbReference type="eggNOG" id="KOG1721">
    <property type="taxonomic scope" value="Eukaryota"/>
</dbReference>
<dbReference type="GeneTree" id="ENSGT00940000158595"/>
<dbReference type="Proteomes" id="UP000233100">
    <property type="component" value="Chromosome 13"/>
</dbReference>
<dbReference type="Bgee" id="ENSMFAG00000032585">
    <property type="expression patterns" value="Expressed in lymph node and 13 other cell types or tissues"/>
</dbReference>
<dbReference type="GO" id="GO:0005634">
    <property type="term" value="C:nucleus"/>
    <property type="evidence" value="ECO:0007669"/>
    <property type="project" value="UniProtKB-SubCell"/>
</dbReference>
<dbReference type="GO" id="GO:0003677">
    <property type="term" value="F:DNA binding"/>
    <property type="evidence" value="ECO:0007669"/>
    <property type="project" value="UniProtKB-KW"/>
</dbReference>
<dbReference type="GO" id="GO:0008270">
    <property type="term" value="F:zinc ion binding"/>
    <property type="evidence" value="ECO:0007669"/>
    <property type="project" value="UniProtKB-KW"/>
</dbReference>
<dbReference type="FunFam" id="3.30.160.60:FF:000177">
    <property type="entry name" value="Zinc finger protein 512"/>
    <property type="match status" value="1"/>
</dbReference>
<dbReference type="FunFam" id="3.30.160.60:FF:000270">
    <property type="entry name" value="Zinc finger protein 512"/>
    <property type="match status" value="1"/>
</dbReference>
<dbReference type="FunFam" id="3.30.160.60:FF:000580">
    <property type="entry name" value="Zinc finger protein 512"/>
    <property type="match status" value="1"/>
</dbReference>
<dbReference type="Gene3D" id="3.30.160.60">
    <property type="entry name" value="Classic Zinc Finger"/>
    <property type="match status" value="3"/>
</dbReference>
<dbReference type="InterPro" id="IPR052274">
    <property type="entry name" value="Krueppel_C2H2_Zn-finger"/>
</dbReference>
<dbReference type="InterPro" id="IPR048408">
    <property type="entry name" value="ZNF512_C2HC"/>
</dbReference>
<dbReference type="InterPro" id="IPR048403">
    <property type="entry name" value="ZNF512_znf-C2H2"/>
</dbReference>
<dbReference type="InterPro" id="IPR036236">
    <property type="entry name" value="Znf_C2H2_sf"/>
</dbReference>
<dbReference type="InterPro" id="IPR013087">
    <property type="entry name" value="Znf_C2H2_type"/>
</dbReference>
<dbReference type="PANTHER" id="PTHR22979:SF2">
    <property type="entry name" value="ZINC FINGER PROTEIN 512"/>
    <property type="match status" value="1"/>
</dbReference>
<dbReference type="PANTHER" id="PTHR22979">
    <property type="entry name" value="ZINC FINGER PROTEIN-RELATED"/>
    <property type="match status" value="1"/>
</dbReference>
<dbReference type="Pfam" id="PF00096">
    <property type="entry name" value="zf-C2H2"/>
    <property type="match status" value="1"/>
</dbReference>
<dbReference type="Pfam" id="PF21276">
    <property type="entry name" value="ZNF512_C2HC"/>
    <property type="match status" value="2"/>
</dbReference>
<dbReference type="Pfam" id="PF21367">
    <property type="entry name" value="ZNF512_zf-C2H2"/>
    <property type="match status" value="1"/>
</dbReference>
<dbReference type="SMART" id="SM00355">
    <property type="entry name" value="ZnF_C2H2"/>
    <property type="match status" value="4"/>
</dbReference>
<dbReference type="SUPFAM" id="SSF57667">
    <property type="entry name" value="beta-beta-alpha zinc fingers"/>
    <property type="match status" value="5"/>
</dbReference>
<dbReference type="PROSITE" id="PS00028">
    <property type="entry name" value="ZINC_FINGER_C2H2_1"/>
    <property type="match status" value="3"/>
</dbReference>
<dbReference type="PROSITE" id="PS50157">
    <property type="entry name" value="ZINC_FINGER_C2H2_2"/>
    <property type="match status" value="2"/>
</dbReference>
<evidence type="ECO:0000250" key="1">
    <source>
        <dbReference type="UniProtKB" id="Q96ME7"/>
    </source>
</evidence>
<evidence type="ECO:0000255" key="2">
    <source>
        <dbReference type="PROSITE-ProRule" id="PRU00042"/>
    </source>
</evidence>
<evidence type="ECO:0000256" key="3">
    <source>
        <dbReference type="SAM" id="MobiDB-lite"/>
    </source>
</evidence>
<evidence type="ECO:0000305" key="4"/>
<organism>
    <name type="scientific">Macaca fascicularis</name>
    <name type="common">Crab-eating macaque</name>
    <name type="synonym">Cynomolgus monkey</name>
    <dbReference type="NCBI Taxonomy" id="9541"/>
    <lineage>
        <taxon>Eukaryota</taxon>
        <taxon>Metazoa</taxon>
        <taxon>Chordata</taxon>
        <taxon>Craniata</taxon>
        <taxon>Vertebrata</taxon>
        <taxon>Euteleostomi</taxon>
        <taxon>Mammalia</taxon>
        <taxon>Eutheria</taxon>
        <taxon>Euarchontoglires</taxon>
        <taxon>Primates</taxon>
        <taxon>Haplorrhini</taxon>
        <taxon>Catarrhini</taxon>
        <taxon>Cercopithecidae</taxon>
        <taxon>Cercopithecinae</taxon>
        <taxon>Macaca</taxon>
    </lineage>
</organism>
<feature type="chain" id="PRO_0000047631" description="Zinc finger protein 512">
    <location>
        <begin position="1"/>
        <end position="565"/>
    </location>
</feature>
<feature type="zinc finger region" description="C2H2-type 1" evidence="2">
    <location>
        <begin position="196"/>
        <end position="219"/>
    </location>
</feature>
<feature type="zinc finger region" description="C2H2-type 2" evidence="2">
    <location>
        <begin position="286"/>
        <end position="309"/>
    </location>
</feature>
<feature type="zinc finger region" description="C2H2-type 3; atypical" evidence="2">
    <location>
        <begin position="405"/>
        <end position="429"/>
    </location>
</feature>
<feature type="zinc finger region" description="C2H2-type 4" evidence="2">
    <location>
        <begin position="439"/>
        <end position="462"/>
    </location>
</feature>
<feature type="region of interest" description="Disordered" evidence="3">
    <location>
        <begin position="1"/>
        <end position="30"/>
    </location>
</feature>
<feature type="region of interest" description="Disordered" evidence="3">
    <location>
        <begin position="85"/>
        <end position="147"/>
    </location>
</feature>
<feature type="region of interest" description="Disordered" evidence="3">
    <location>
        <begin position="484"/>
        <end position="565"/>
    </location>
</feature>
<feature type="compositionally biased region" description="Polar residues" evidence="3">
    <location>
        <begin position="12"/>
        <end position="23"/>
    </location>
</feature>
<feature type="compositionally biased region" description="Basic residues" evidence="3">
    <location>
        <begin position="118"/>
        <end position="129"/>
    </location>
</feature>
<feature type="compositionally biased region" description="Basic and acidic residues" evidence="3">
    <location>
        <begin position="484"/>
        <end position="493"/>
    </location>
</feature>
<feature type="compositionally biased region" description="Basic residues" evidence="3">
    <location>
        <begin position="494"/>
        <end position="507"/>
    </location>
</feature>
<feature type="compositionally biased region" description="Basic and acidic residues" evidence="3">
    <location>
        <begin position="522"/>
        <end position="531"/>
    </location>
</feature>
<feature type="compositionally biased region" description="Basic residues" evidence="3">
    <location>
        <begin position="554"/>
        <end position="565"/>
    </location>
</feature>
<feature type="cross-link" description="Glycyl lysine isopeptide (Lys-Gly) (interchain with G-Cter in SUMO2)" evidence="1">
    <location>
        <position position="18"/>
    </location>
</feature>
<feature type="cross-link" description="Glycyl lysine isopeptide (Lys-Gly) (interchain with G-Cter in SUMO2)" evidence="1">
    <location>
        <position position="83"/>
    </location>
</feature>
<feature type="cross-link" description="Glycyl lysine isopeptide (Lys-Gly) (interchain with G-Cter in SUMO2)" evidence="1">
    <location>
        <position position="226"/>
    </location>
</feature>
<feature type="cross-link" description="Glycyl lysine isopeptide (Lys-Gly) (interchain with G-Cter in SUMO2)" evidence="1">
    <location>
        <position position="332"/>
    </location>
</feature>
<accession>Q95JV5</accession>
<proteinExistence type="evidence at transcript level"/>
<comment type="function">
    <text>May be involved in transcriptional regulation.</text>
</comment>
<comment type="subcellular location">
    <subcellularLocation>
        <location evidence="4">Nucleus</location>
    </subcellularLocation>
</comment>
<comment type="similarity">
    <text evidence="4">Belongs to the krueppel C2H2-type zinc-finger protein family.</text>
</comment>
<sequence length="565" mass="64495">MSSRLGAVPATSGPTTFKQQRSTRIVGAKNRTQCSIKDNSFQYTIPHDDSLSGSSSASSCEPVSDFPASFRKSTYWMKMRRIKPAATSHVEGSGGVSAKGKRKPRQEEDEDYREFPQKKHKLYGRKQRPKTQPNPKSQARRIRKEPPVYAAGSLEEQWYLEIVDKGSVSCPTCQAVGRKTIEGLKKHMENCKQEMFTCHHCGKQLRSLAGMKYHVMANHNSLPILKAGDEIDEPTERERLRTVLKRLGKLRCMRESCSSSFTSIMGYLYHVRKCGKGAAELEKMTLKCHHCGKPYRSKAGLAYHLRSEHGPISFFPESGQPECLKEMNLESKSGGRVQRRSAKIAVYHLQELASAELAKEWPKRKVLQDLVPDDRKLKYTRPGLPTFSQEVLHKWKTDIKKYHRIQCPNQGCEAVYSSVSGLKAHLGSCTLGNFVAGKYKCLLCQKEFVSESGVKYHINSVHAEDWFVVNPTTTKSFEKLMKIKQRQQEEEKRRQQHRSRRSLRRRQQPGIELPETELSLRVGKDQRRNEELVVSASCKEPEQEPVPAQFQKVKPPKTNHKRGRK</sequence>
<reference key="1">
    <citation type="journal article" date="2002" name="BMC Genomics">
        <title>Cynomolgus monkey testicular cDNAs for discovery of novel human genes in the human genome sequence.</title>
        <authorList>
            <person name="Osada N."/>
            <person name="Hida M."/>
            <person name="Kusuda J."/>
            <person name="Tanuma R."/>
            <person name="Hirata M."/>
            <person name="Suto Y."/>
            <person name="Hirai M."/>
            <person name="Terao K."/>
            <person name="Sugano S."/>
            <person name="Hashimoto K."/>
        </authorList>
    </citation>
    <scope>NUCLEOTIDE SEQUENCE [LARGE SCALE MRNA]</scope>
    <source>
        <tissue>Testis</tissue>
    </source>
</reference>
<name>ZN512_MACFA</name>
<gene>
    <name type="primary">ZNF512</name>
    <name type="ORF">QtsA-11181</name>
</gene>
<protein>
    <recommendedName>
        <fullName>Zinc finger protein 512</fullName>
    </recommendedName>
</protein>